<proteinExistence type="inferred from homology"/>
<gene>
    <name evidence="1" type="primary">efp</name>
    <name type="ordered locus">A1C_01750</name>
</gene>
<evidence type="ECO:0000255" key="1">
    <source>
        <dbReference type="HAMAP-Rule" id="MF_00141"/>
    </source>
</evidence>
<comment type="function">
    <text evidence="1">Involved in peptide bond synthesis. Stimulates efficient translation and peptide-bond synthesis on native or reconstituted 70S ribosomes in vitro. Probably functions indirectly by altering the affinity of the ribosome for aminoacyl-tRNA, thus increasing their reactivity as acceptors for peptidyl transferase.</text>
</comment>
<comment type="pathway">
    <text evidence="1">Protein biosynthesis; polypeptide chain elongation.</text>
</comment>
<comment type="subcellular location">
    <subcellularLocation>
        <location evidence="1">Cytoplasm</location>
    </subcellularLocation>
</comment>
<comment type="similarity">
    <text evidence="1">Belongs to the elongation factor P family.</text>
</comment>
<sequence>MKISANSIRTGNILVCNNDLWVVSKTPEHTQPGKGGAYVQVEMKNLKTGIKRNDRFSSSDYLEKAELEQKDYQFLYFEGNDLILMDTKHFDQINVPKGILEEKLPFLTENMIVKVEFYNEKPLNIELPPTVILEISETDPVIKGATATASYKPAVLENGIKVKVPQYLAIGEKIVVKTDDITYVERAK</sequence>
<feature type="chain" id="PRO_1000010834" description="Elongation factor P">
    <location>
        <begin position="1"/>
        <end position="188"/>
    </location>
</feature>
<name>EFP_RICAH</name>
<accession>A8GMN6</accession>
<organism>
    <name type="scientific">Rickettsia akari (strain Hartford)</name>
    <dbReference type="NCBI Taxonomy" id="293614"/>
    <lineage>
        <taxon>Bacteria</taxon>
        <taxon>Pseudomonadati</taxon>
        <taxon>Pseudomonadota</taxon>
        <taxon>Alphaproteobacteria</taxon>
        <taxon>Rickettsiales</taxon>
        <taxon>Rickettsiaceae</taxon>
        <taxon>Rickettsieae</taxon>
        <taxon>Rickettsia</taxon>
        <taxon>spotted fever group</taxon>
    </lineage>
</organism>
<reference key="1">
    <citation type="submission" date="2007-09" db="EMBL/GenBank/DDBJ databases">
        <title>Complete genome sequence of Rickettsia akari.</title>
        <authorList>
            <person name="Madan A."/>
            <person name="Fahey J."/>
            <person name="Helton E."/>
            <person name="Ketteman M."/>
            <person name="Madan A."/>
            <person name="Rodrigues S."/>
            <person name="Sanchez A."/>
            <person name="Whiting M."/>
            <person name="Dasch G."/>
            <person name="Eremeeva M."/>
        </authorList>
    </citation>
    <scope>NUCLEOTIDE SEQUENCE [LARGE SCALE GENOMIC DNA]</scope>
    <source>
        <strain>Hartford</strain>
    </source>
</reference>
<dbReference type="EMBL" id="CP000847">
    <property type="protein sequence ID" value="ABV74661.1"/>
    <property type="molecule type" value="Genomic_DNA"/>
</dbReference>
<dbReference type="RefSeq" id="WP_012149295.1">
    <property type="nucleotide sequence ID" value="NC_009881.1"/>
</dbReference>
<dbReference type="SMR" id="A8GMN6"/>
<dbReference type="STRING" id="293614.A1C_01750"/>
<dbReference type="KEGG" id="rak:A1C_01750"/>
<dbReference type="eggNOG" id="COG0231">
    <property type="taxonomic scope" value="Bacteria"/>
</dbReference>
<dbReference type="HOGENOM" id="CLU_074944_0_1_5"/>
<dbReference type="UniPathway" id="UPA00345"/>
<dbReference type="Proteomes" id="UP000006830">
    <property type="component" value="Chromosome"/>
</dbReference>
<dbReference type="GO" id="GO:0005737">
    <property type="term" value="C:cytoplasm"/>
    <property type="evidence" value="ECO:0007669"/>
    <property type="project" value="UniProtKB-SubCell"/>
</dbReference>
<dbReference type="GO" id="GO:0003746">
    <property type="term" value="F:translation elongation factor activity"/>
    <property type="evidence" value="ECO:0007669"/>
    <property type="project" value="UniProtKB-UniRule"/>
</dbReference>
<dbReference type="GO" id="GO:0043043">
    <property type="term" value="P:peptide biosynthetic process"/>
    <property type="evidence" value="ECO:0007669"/>
    <property type="project" value="InterPro"/>
</dbReference>
<dbReference type="CDD" id="cd04470">
    <property type="entry name" value="S1_EF-P_repeat_1"/>
    <property type="match status" value="1"/>
</dbReference>
<dbReference type="FunFam" id="2.40.50.140:FF:000004">
    <property type="entry name" value="Elongation factor P"/>
    <property type="match status" value="1"/>
</dbReference>
<dbReference type="FunFam" id="2.40.50.140:FF:000009">
    <property type="entry name" value="Elongation factor P"/>
    <property type="match status" value="1"/>
</dbReference>
<dbReference type="Gene3D" id="2.30.30.30">
    <property type="match status" value="1"/>
</dbReference>
<dbReference type="Gene3D" id="2.40.50.140">
    <property type="entry name" value="Nucleic acid-binding proteins"/>
    <property type="match status" value="2"/>
</dbReference>
<dbReference type="HAMAP" id="MF_00141">
    <property type="entry name" value="EF_P"/>
    <property type="match status" value="1"/>
</dbReference>
<dbReference type="InterPro" id="IPR015365">
    <property type="entry name" value="Elong-fact-P_C"/>
</dbReference>
<dbReference type="InterPro" id="IPR012340">
    <property type="entry name" value="NA-bd_OB-fold"/>
</dbReference>
<dbReference type="InterPro" id="IPR014722">
    <property type="entry name" value="Rib_uL2_dom2"/>
</dbReference>
<dbReference type="InterPro" id="IPR020599">
    <property type="entry name" value="Transl_elong_fac_P/YeiP"/>
</dbReference>
<dbReference type="InterPro" id="IPR013185">
    <property type="entry name" value="Transl_elong_KOW-like"/>
</dbReference>
<dbReference type="InterPro" id="IPR001059">
    <property type="entry name" value="Transl_elong_P/YeiP_cen"/>
</dbReference>
<dbReference type="InterPro" id="IPR013852">
    <property type="entry name" value="Transl_elong_P/YeiP_CS"/>
</dbReference>
<dbReference type="InterPro" id="IPR011768">
    <property type="entry name" value="Transl_elongation_fac_P"/>
</dbReference>
<dbReference type="InterPro" id="IPR008991">
    <property type="entry name" value="Translation_prot_SH3-like_sf"/>
</dbReference>
<dbReference type="NCBIfam" id="TIGR00038">
    <property type="entry name" value="efp"/>
    <property type="match status" value="1"/>
</dbReference>
<dbReference type="NCBIfam" id="NF001810">
    <property type="entry name" value="PRK00529.1"/>
    <property type="match status" value="1"/>
</dbReference>
<dbReference type="PANTHER" id="PTHR30053">
    <property type="entry name" value="ELONGATION FACTOR P"/>
    <property type="match status" value="1"/>
</dbReference>
<dbReference type="PANTHER" id="PTHR30053:SF14">
    <property type="entry name" value="TRANSLATION ELONGATION FACTOR KOW-LIKE DOMAIN-CONTAINING PROTEIN"/>
    <property type="match status" value="1"/>
</dbReference>
<dbReference type="Pfam" id="PF01132">
    <property type="entry name" value="EFP"/>
    <property type="match status" value="1"/>
</dbReference>
<dbReference type="Pfam" id="PF08207">
    <property type="entry name" value="EFP_N"/>
    <property type="match status" value="1"/>
</dbReference>
<dbReference type="Pfam" id="PF09285">
    <property type="entry name" value="Elong-fact-P_C"/>
    <property type="match status" value="1"/>
</dbReference>
<dbReference type="PIRSF" id="PIRSF005901">
    <property type="entry name" value="EF-P"/>
    <property type="match status" value="1"/>
</dbReference>
<dbReference type="SMART" id="SM01185">
    <property type="entry name" value="EFP"/>
    <property type="match status" value="1"/>
</dbReference>
<dbReference type="SMART" id="SM00841">
    <property type="entry name" value="Elong-fact-P_C"/>
    <property type="match status" value="1"/>
</dbReference>
<dbReference type="SUPFAM" id="SSF50249">
    <property type="entry name" value="Nucleic acid-binding proteins"/>
    <property type="match status" value="2"/>
</dbReference>
<dbReference type="SUPFAM" id="SSF50104">
    <property type="entry name" value="Translation proteins SH3-like domain"/>
    <property type="match status" value="1"/>
</dbReference>
<dbReference type="PROSITE" id="PS01275">
    <property type="entry name" value="EFP"/>
    <property type="match status" value="1"/>
</dbReference>
<protein>
    <recommendedName>
        <fullName evidence="1">Elongation factor P</fullName>
        <shortName evidence="1">EF-P</shortName>
    </recommendedName>
</protein>
<keyword id="KW-0963">Cytoplasm</keyword>
<keyword id="KW-0251">Elongation factor</keyword>
<keyword id="KW-0648">Protein biosynthesis</keyword>